<proteinExistence type="inferred from homology"/>
<gene>
    <name evidence="1" type="primary">rpmI</name>
    <name type="ordered locus">MHJ_0120</name>
</gene>
<protein>
    <recommendedName>
        <fullName evidence="1">Large ribosomal subunit protein bL35</fullName>
    </recommendedName>
    <alternativeName>
        <fullName evidence="3">50S ribosomal protein L35</fullName>
    </alternativeName>
</protein>
<accession>Q4AAK9</accession>
<evidence type="ECO:0000255" key="1">
    <source>
        <dbReference type="HAMAP-Rule" id="MF_00514"/>
    </source>
</evidence>
<evidence type="ECO:0000256" key="2">
    <source>
        <dbReference type="SAM" id="MobiDB-lite"/>
    </source>
</evidence>
<evidence type="ECO:0000305" key="3"/>
<comment type="similarity">
    <text evidence="1">Belongs to the bacterial ribosomal protein bL35 family.</text>
</comment>
<reference key="1">
    <citation type="journal article" date="2005" name="J. Bacteriol.">
        <title>Swine and poultry pathogens: the complete genome sequences of two strains of Mycoplasma hyopneumoniae and a strain of Mycoplasma synoviae.</title>
        <authorList>
            <person name="Vasconcelos A.T.R."/>
            <person name="Ferreira H.B."/>
            <person name="Bizarro C.V."/>
            <person name="Bonatto S.L."/>
            <person name="Carvalho M.O."/>
            <person name="Pinto P.M."/>
            <person name="Almeida D.F."/>
            <person name="Almeida L.G.P."/>
            <person name="Almeida R."/>
            <person name="Alves-Junior L."/>
            <person name="Assuncao E.N."/>
            <person name="Azevedo V.A.C."/>
            <person name="Bogo M.R."/>
            <person name="Brigido M.M."/>
            <person name="Brocchi M."/>
            <person name="Burity H.A."/>
            <person name="Camargo A.A."/>
            <person name="Camargo S.S."/>
            <person name="Carepo M.S."/>
            <person name="Carraro D.M."/>
            <person name="de Mattos Cascardo J.C."/>
            <person name="Castro L.A."/>
            <person name="Cavalcanti G."/>
            <person name="Chemale G."/>
            <person name="Collevatti R.G."/>
            <person name="Cunha C.W."/>
            <person name="Dallagiovanna B."/>
            <person name="Dambros B.P."/>
            <person name="Dellagostin O.A."/>
            <person name="Falcao C."/>
            <person name="Fantinatti-Garboggini F."/>
            <person name="Felipe M.S.S."/>
            <person name="Fiorentin L."/>
            <person name="Franco G.R."/>
            <person name="Freitas N.S.A."/>
            <person name="Frias D."/>
            <person name="Grangeiro T.B."/>
            <person name="Grisard E.C."/>
            <person name="Guimaraes C.T."/>
            <person name="Hungria M."/>
            <person name="Jardim S.N."/>
            <person name="Krieger M.A."/>
            <person name="Laurino J.P."/>
            <person name="Lima L.F.A."/>
            <person name="Lopes M.I."/>
            <person name="Loreto E.L.S."/>
            <person name="Madeira H.M.F."/>
            <person name="Manfio G.P."/>
            <person name="Maranhao A.Q."/>
            <person name="Martinkovics C.T."/>
            <person name="Medeiros S.R.B."/>
            <person name="Moreira M.A.M."/>
            <person name="Neiva M."/>
            <person name="Ramalho-Neto C.E."/>
            <person name="Nicolas M.F."/>
            <person name="Oliveira S.C."/>
            <person name="Paixao R.F.C."/>
            <person name="Pedrosa F.O."/>
            <person name="Pena S.D.J."/>
            <person name="Pereira M."/>
            <person name="Pereira-Ferrari L."/>
            <person name="Piffer I."/>
            <person name="Pinto L.S."/>
            <person name="Potrich D.P."/>
            <person name="Salim A.C.M."/>
            <person name="Santos F.R."/>
            <person name="Schmitt R."/>
            <person name="Schneider M.P.C."/>
            <person name="Schrank A."/>
            <person name="Schrank I.S."/>
            <person name="Schuck A.F."/>
            <person name="Seuanez H.N."/>
            <person name="Silva D.W."/>
            <person name="Silva R."/>
            <person name="Silva S.C."/>
            <person name="Soares C.M.A."/>
            <person name="Souza K.R.L."/>
            <person name="Souza R.C."/>
            <person name="Staats C.C."/>
            <person name="Steffens M.B.R."/>
            <person name="Teixeira S.M.R."/>
            <person name="Urmenyi T.P."/>
            <person name="Vainstein M.H."/>
            <person name="Zuccherato L.W."/>
            <person name="Simpson A.J.G."/>
            <person name="Zaha A."/>
        </authorList>
    </citation>
    <scope>NUCLEOTIDE SEQUENCE [LARGE SCALE GENOMIC DNA]</scope>
    <source>
        <strain>J / ATCC 25934 / NCTC 10110</strain>
    </source>
</reference>
<dbReference type="EMBL" id="AE017243">
    <property type="protein sequence ID" value="AAZ44212.2"/>
    <property type="molecule type" value="Genomic_DNA"/>
</dbReference>
<dbReference type="RefSeq" id="WP_011206094.1">
    <property type="nucleotide sequence ID" value="NC_007295.1"/>
</dbReference>
<dbReference type="SMR" id="Q4AAK9"/>
<dbReference type="GeneID" id="41334422"/>
<dbReference type="KEGG" id="mhj:MHJ_0120"/>
<dbReference type="eggNOG" id="COG0291">
    <property type="taxonomic scope" value="Bacteria"/>
</dbReference>
<dbReference type="HOGENOM" id="CLU_169643_3_1_14"/>
<dbReference type="OrthoDB" id="47476at2"/>
<dbReference type="Proteomes" id="UP000000548">
    <property type="component" value="Chromosome"/>
</dbReference>
<dbReference type="GO" id="GO:0022625">
    <property type="term" value="C:cytosolic large ribosomal subunit"/>
    <property type="evidence" value="ECO:0007669"/>
    <property type="project" value="TreeGrafter"/>
</dbReference>
<dbReference type="GO" id="GO:0003735">
    <property type="term" value="F:structural constituent of ribosome"/>
    <property type="evidence" value="ECO:0007669"/>
    <property type="project" value="InterPro"/>
</dbReference>
<dbReference type="GO" id="GO:0006412">
    <property type="term" value="P:translation"/>
    <property type="evidence" value="ECO:0007669"/>
    <property type="project" value="UniProtKB-UniRule"/>
</dbReference>
<dbReference type="FunFam" id="4.10.410.60:FF:000001">
    <property type="entry name" value="50S ribosomal protein L35"/>
    <property type="match status" value="1"/>
</dbReference>
<dbReference type="Gene3D" id="4.10.410.60">
    <property type="match status" value="1"/>
</dbReference>
<dbReference type="HAMAP" id="MF_00514">
    <property type="entry name" value="Ribosomal_bL35"/>
    <property type="match status" value="1"/>
</dbReference>
<dbReference type="InterPro" id="IPR001706">
    <property type="entry name" value="Ribosomal_bL35"/>
</dbReference>
<dbReference type="InterPro" id="IPR021137">
    <property type="entry name" value="Ribosomal_bL35-like"/>
</dbReference>
<dbReference type="InterPro" id="IPR018265">
    <property type="entry name" value="Ribosomal_bL35_CS"/>
</dbReference>
<dbReference type="InterPro" id="IPR037229">
    <property type="entry name" value="Ribosomal_bL35_sf"/>
</dbReference>
<dbReference type="NCBIfam" id="TIGR00001">
    <property type="entry name" value="rpmI_bact"/>
    <property type="match status" value="1"/>
</dbReference>
<dbReference type="PANTHER" id="PTHR33343">
    <property type="entry name" value="54S RIBOSOMAL PROTEIN BL35M"/>
    <property type="match status" value="1"/>
</dbReference>
<dbReference type="PANTHER" id="PTHR33343:SF1">
    <property type="entry name" value="LARGE RIBOSOMAL SUBUNIT PROTEIN BL35M"/>
    <property type="match status" value="1"/>
</dbReference>
<dbReference type="Pfam" id="PF01632">
    <property type="entry name" value="Ribosomal_L35p"/>
    <property type="match status" value="1"/>
</dbReference>
<dbReference type="PRINTS" id="PR00064">
    <property type="entry name" value="RIBOSOMALL35"/>
</dbReference>
<dbReference type="SUPFAM" id="SSF143034">
    <property type="entry name" value="L35p-like"/>
    <property type="match status" value="1"/>
</dbReference>
<dbReference type="PROSITE" id="PS00936">
    <property type="entry name" value="RIBOSOMAL_L35"/>
    <property type="match status" value="1"/>
</dbReference>
<name>RL35_MESHJ</name>
<sequence>MSKIKFKTKSALKKRIKVTGTGKVKHGHAYRSHLAQSKTTKQKRQSRKSTLMNNSDFKRLKKLI</sequence>
<feature type="chain" id="PRO_0000258707" description="Large ribosomal subunit protein bL35">
    <location>
        <begin position="1"/>
        <end position="64"/>
    </location>
</feature>
<feature type="region of interest" description="Disordered" evidence="2">
    <location>
        <begin position="22"/>
        <end position="64"/>
    </location>
</feature>
<feature type="compositionally biased region" description="Basic residues" evidence="2">
    <location>
        <begin position="22"/>
        <end position="31"/>
    </location>
</feature>
<organism>
    <name type="scientific">Mesomycoplasma hyopneumoniae (strain J / ATCC 25934 / NCTC 10110)</name>
    <name type="common">Mycoplasma hyopneumoniae</name>
    <dbReference type="NCBI Taxonomy" id="262719"/>
    <lineage>
        <taxon>Bacteria</taxon>
        <taxon>Bacillati</taxon>
        <taxon>Mycoplasmatota</taxon>
        <taxon>Mycoplasmoidales</taxon>
        <taxon>Metamycoplasmataceae</taxon>
        <taxon>Mesomycoplasma</taxon>
    </lineage>
</organism>
<keyword id="KW-0687">Ribonucleoprotein</keyword>
<keyword id="KW-0689">Ribosomal protein</keyword>